<name>APT_BURCH</name>
<organism>
    <name type="scientific">Burkholderia cenocepacia (strain HI2424)</name>
    <dbReference type="NCBI Taxonomy" id="331272"/>
    <lineage>
        <taxon>Bacteria</taxon>
        <taxon>Pseudomonadati</taxon>
        <taxon>Pseudomonadota</taxon>
        <taxon>Betaproteobacteria</taxon>
        <taxon>Burkholderiales</taxon>
        <taxon>Burkholderiaceae</taxon>
        <taxon>Burkholderia</taxon>
        <taxon>Burkholderia cepacia complex</taxon>
    </lineage>
</organism>
<keyword id="KW-0963">Cytoplasm</keyword>
<keyword id="KW-0328">Glycosyltransferase</keyword>
<keyword id="KW-0660">Purine salvage</keyword>
<keyword id="KW-0808">Transferase</keyword>
<proteinExistence type="inferred from homology"/>
<sequence>MPHSSPGAPLDPVAFIHSQIRTVPDWPQPGVQFRDITTLLQSPKALRILVDLFVERYVDAKLDYVAGLDARGFIIAPIVAYELSVGFVPIRKVGKLPYKTRSESYDLEYGSATVEIHEDACKPGDRVIIMDDLIATGGTMMAGRNLLQRLGAEVVEGAAIIDLPDLGGSTLLRNAGLTVYTVTEFSGH</sequence>
<gene>
    <name evidence="1" type="primary">apt</name>
    <name type="ordered locus">Bcen2424_2784</name>
</gene>
<reference key="1">
    <citation type="submission" date="2006-08" db="EMBL/GenBank/DDBJ databases">
        <title>Complete sequence of chromosome 1 of Burkholderia cenocepacia HI2424.</title>
        <authorList>
            <person name="Copeland A."/>
            <person name="Lucas S."/>
            <person name="Lapidus A."/>
            <person name="Barry K."/>
            <person name="Detter J.C."/>
            <person name="Glavina del Rio T."/>
            <person name="Hammon N."/>
            <person name="Israni S."/>
            <person name="Pitluck S."/>
            <person name="Chain P."/>
            <person name="Malfatti S."/>
            <person name="Shin M."/>
            <person name="Vergez L."/>
            <person name="Schmutz J."/>
            <person name="Larimer F."/>
            <person name="Land M."/>
            <person name="Hauser L."/>
            <person name="Kyrpides N."/>
            <person name="Kim E."/>
            <person name="LiPuma J.J."/>
            <person name="Gonzalez C.F."/>
            <person name="Konstantinidis K."/>
            <person name="Tiedje J.M."/>
            <person name="Richardson P."/>
        </authorList>
    </citation>
    <scope>NUCLEOTIDE SEQUENCE [LARGE SCALE GENOMIC DNA]</scope>
    <source>
        <strain>HI2424</strain>
    </source>
</reference>
<comment type="function">
    <text evidence="1">Catalyzes a salvage reaction resulting in the formation of AMP, that is energically less costly than de novo synthesis.</text>
</comment>
<comment type="catalytic activity">
    <reaction evidence="1">
        <text>AMP + diphosphate = 5-phospho-alpha-D-ribose 1-diphosphate + adenine</text>
        <dbReference type="Rhea" id="RHEA:16609"/>
        <dbReference type="ChEBI" id="CHEBI:16708"/>
        <dbReference type="ChEBI" id="CHEBI:33019"/>
        <dbReference type="ChEBI" id="CHEBI:58017"/>
        <dbReference type="ChEBI" id="CHEBI:456215"/>
        <dbReference type="EC" id="2.4.2.7"/>
    </reaction>
</comment>
<comment type="pathway">
    <text evidence="1">Purine metabolism; AMP biosynthesis via salvage pathway; AMP from adenine: step 1/1.</text>
</comment>
<comment type="subunit">
    <text evidence="1">Homodimer.</text>
</comment>
<comment type="subcellular location">
    <subcellularLocation>
        <location evidence="1">Cytoplasm</location>
    </subcellularLocation>
</comment>
<comment type="similarity">
    <text evidence="1">Belongs to the purine/pyrimidine phosphoribosyltransferase family.</text>
</comment>
<dbReference type="EC" id="2.4.2.7" evidence="1"/>
<dbReference type="EMBL" id="CP000458">
    <property type="protein sequence ID" value="ABK09534.1"/>
    <property type="molecule type" value="Genomic_DNA"/>
</dbReference>
<dbReference type="RefSeq" id="WP_011546233.1">
    <property type="nucleotide sequence ID" value="NC_008542.1"/>
</dbReference>
<dbReference type="SMR" id="A0KAK7"/>
<dbReference type="KEGG" id="bch:Bcen2424_2784"/>
<dbReference type="HOGENOM" id="CLU_063339_3_0_4"/>
<dbReference type="UniPathway" id="UPA00588">
    <property type="reaction ID" value="UER00646"/>
</dbReference>
<dbReference type="GO" id="GO:0005829">
    <property type="term" value="C:cytosol"/>
    <property type="evidence" value="ECO:0007669"/>
    <property type="project" value="TreeGrafter"/>
</dbReference>
<dbReference type="GO" id="GO:0003999">
    <property type="term" value="F:adenine phosphoribosyltransferase activity"/>
    <property type="evidence" value="ECO:0007669"/>
    <property type="project" value="UniProtKB-UniRule"/>
</dbReference>
<dbReference type="GO" id="GO:0006168">
    <property type="term" value="P:adenine salvage"/>
    <property type="evidence" value="ECO:0007669"/>
    <property type="project" value="InterPro"/>
</dbReference>
<dbReference type="GO" id="GO:0044209">
    <property type="term" value="P:AMP salvage"/>
    <property type="evidence" value="ECO:0007669"/>
    <property type="project" value="UniProtKB-UniRule"/>
</dbReference>
<dbReference type="GO" id="GO:0006166">
    <property type="term" value="P:purine ribonucleoside salvage"/>
    <property type="evidence" value="ECO:0007669"/>
    <property type="project" value="UniProtKB-KW"/>
</dbReference>
<dbReference type="CDD" id="cd06223">
    <property type="entry name" value="PRTases_typeI"/>
    <property type="match status" value="1"/>
</dbReference>
<dbReference type="FunFam" id="3.40.50.2020:FF:000021">
    <property type="entry name" value="Adenine phosphoribosyltransferase"/>
    <property type="match status" value="1"/>
</dbReference>
<dbReference type="Gene3D" id="3.40.50.2020">
    <property type="match status" value="1"/>
</dbReference>
<dbReference type="HAMAP" id="MF_00004">
    <property type="entry name" value="Aden_phosphoribosyltr"/>
    <property type="match status" value="1"/>
</dbReference>
<dbReference type="InterPro" id="IPR005764">
    <property type="entry name" value="Ade_phspho_trans"/>
</dbReference>
<dbReference type="InterPro" id="IPR050120">
    <property type="entry name" value="Adenine_PRTase"/>
</dbReference>
<dbReference type="InterPro" id="IPR000836">
    <property type="entry name" value="PRibTrfase_dom"/>
</dbReference>
<dbReference type="InterPro" id="IPR029057">
    <property type="entry name" value="PRTase-like"/>
</dbReference>
<dbReference type="NCBIfam" id="TIGR01090">
    <property type="entry name" value="apt"/>
    <property type="match status" value="1"/>
</dbReference>
<dbReference type="NCBIfam" id="NF002634">
    <property type="entry name" value="PRK02304.1-3"/>
    <property type="match status" value="1"/>
</dbReference>
<dbReference type="NCBIfam" id="NF002636">
    <property type="entry name" value="PRK02304.1-5"/>
    <property type="match status" value="1"/>
</dbReference>
<dbReference type="PANTHER" id="PTHR11776">
    <property type="entry name" value="ADENINE PHOSPHORIBOSYLTRANSFERASE"/>
    <property type="match status" value="1"/>
</dbReference>
<dbReference type="PANTHER" id="PTHR11776:SF7">
    <property type="entry name" value="PHOSPHORIBOSYLTRANSFERASE DOMAIN-CONTAINING PROTEIN"/>
    <property type="match status" value="1"/>
</dbReference>
<dbReference type="Pfam" id="PF00156">
    <property type="entry name" value="Pribosyltran"/>
    <property type="match status" value="1"/>
</dbReference>
<dbReference type="SUPFAM" id="SSF53271">
    <property type="entry name" value="PRTase-like"/>
    <property type="match status" value="1"/>
</dbReference>
<dbReference type="PROSITE" id="PS00103">
    <property type="entry name" value="PUR_PYR_PR_TRANSFER"/>
    <property type="match status" value="1"/>
</dbReference>
<accession>A0KAK7</accession>
<feature type="chain" id="PRO_0000321343" description="Adenine phosphoribosyltransferase">
    <location>
        <begin position="1"/>
        <end position="188"/>
    </location>
</feature>
<protein>
    <recommendedName>
        <fullName evidence="1">Adenine phosphoribosyltransferase</fullName>
        <shortName evidence="1">APRT</shortName>
        <ecNumber evidence="1">2.4.2.7</ecNumber>
    </recommendedName>
</protein>
<evidence type="ECO:0000255" key="1">
    <source>
        <dbReference type="HAMAP-Rule" id="MF_00004"/>
    </source>
</evidence>